<sequence>GFKNVALSTARGF</sequence>
<comment type="function">
    <text>The exact physiological function is still unknown. This myotropic peptide is active on the oviduct and, to a lesser extent, on the hindgut. Transferred from the male to the female during copulation.</text>
</comment>
<comment type="tissue specificity">
    <text>Male accessory glands.</text>
</comment>
<proteinExistence type="evidence at protein level"/>
<reference key="1">
    <citation type="journal article" date="1991" name="Peptides">
        <title>Lom-AG-myotropin: a novel myotropic peptide from the male accessory glands of Locusta migratoria.</title>
        <authorList>
            <person name="Paemen L."/>
            <person name="Tips A."/>
            <person name="Schoofs L."/>
            <person name="Proost P."/>
            <person name="van Damme J."/>
            <person name="de Loof A."/>
        </authorList>
    </citation>
    <scope>PROTEIN SEQUENCE</scope>
    <scope>AMIDATION AT PHE-13</scope>
    <scope>SYNTHESIS</scope>
    <source>
        <tissue>Male accessory gland</tissue>
    </source>
</reference>
<organism>
    <name type="scientific">Locusta migratoria</name>
    <name type="common">Migratory locust</name>
    <dbReference type="NCBI Taxonomy" id="7004"/>
    <lineage>
        <taxon>Eukaryota</taxon>
        <taxon>Metazoa</taxon>
        <taxon>Ecdysozoa</taxon>
        <taxon>Arthropoda</taxon>
        <taxon>Hexapoda</taxon>
        <taxon>Insecta</taxon>
        <taxon>Pterygota</taxon>
        <taxon>Neoptera</taxon>
        <taxon>Polyneoptera</taxon>
        <taxon>Orthoptera</taxon>
        <taxon>Caelifera</taxon>
        <taxon>Acrididea</taxon>
        <taxon>Acridomorpha</taxon>
        <taxon>Acridoidea</taxon>
        <taxon>Acrididae</taxon>
        <taxon>Oedipodinae</taxon>
        <taxon>Locusta</taxon>
    </lineage>
</organism>
<accession>P38496</accession>
<keyword id="KW-0027">Amidation</keyword>
<keyword id="KW-0903">Direct protein sequencing</keyword>
<keyword id="KW-0527">Neuropeptide</keyword>
<feature type="peptide" id="PRO_0000044155" description="Lom-AG-myotropin-1">
    <location>
        <begin position="1"/>
        <end position="13"/>
    </location>
</feature>
<feature type="modified residue" description="Phenylalanine amide" evidence="1">
    <location>
        <position position="13"/>
    </location>
</feature>
<name>LMA1_LOCMI</name>
<dbReference type="GO" id="GO:0007218">
    <property type="term" value="P:neuropeptide signaling pathway"/>
    <property type="evidence" value="ECO:0007669"/>
    <property type="project" value="UniProtKB-KW"/>
</dbReference>
<protein>
    <recommendedName>
        <fullName>Lom-AG-myotropin-1</fullName>
    </recommendedName>
    <alternativeName>
        <fullName>Accessory gland myotropin I</fullName>
    </alternativeName>
    <alternativeName>
        <fullName>Lom-AG-myotropin I</fullName>
    </alternativeName>
</protein>
<evidence type="ECO:0000269" key="1">
    <source>
    </source>
</evidence>